<comment type="function">
    <text evidence="1">Catalyzes the isomerization between 2-isopropylmalate and 3-isopropylmalate, via the formation of 2-isopropylmaleate.</text>
</comment>
<comment type="catalytic activity">
    <reaction evidence="1">
        <text>(2R,3S)-3-isopropylmalate = (2S)-2-isopropylmalate</text>
        <dbReference type="Rhea" id="RHEA:32287"/>
        <dbReference type="ChEBI" id="CHEBI:1178"/>
        <dbReference type="ChEBI" id="CHEBI:35121"/>
        <dbReference type="EC" id="4.2.1.33"/>
    </reaction>
</comment>
<comment type="pathway">
    <text evidence="1">Amino-acid biosynthesis; L-leucine biosynthesis; L-leucine from 3-methyl-2-oxobutanoate: step 2/4.</text>
</comment>
<comment type="subunit">
    <text evidence="1">Heterodimer of LeuC and LeuD.</text>
</comment>
<comment type="similarity">
    <text evidence="1">Belongs to the LeuD family. LeuD type 1 subfamily.</text>
</comment>
<accession>Q5F8T3</accession>
<organism>
    <name type="scientific">Neisseria gonorrhoeae (strain ATCC 700825 / FA 1090)</name>
    <dbReference type="NCBI Taxonomy" id="242231"/>
    <lineage>
        <taxon>Bacteria</taxon>
        <taxon>Pseudomonadati</taxon>
        <taxon>Pseudomonadota</taxon>
        <taxon>Betaproteobacteria</taxon>
        <taxon>Neisseriales</taxon>
        <taxon>Neisseriaceae</taxon>
        <taxon>Neisseria</taxon>
    </lineage>
</organism>
<keyword id="KW-0028">Amino-acid biosynthesis</keyword>
<keyword id="KW-0100">Branched-chain amino acid biosynthesis</keyword>
<keyword id="KW-0432">Leucine biosynthesis</keyword>
<keyword id="KW-0456">Lyase</keyword>
<keyword id="KW-1185">Reference proteome</keyword>
<gene>
    <name evidence="1" type="primary">leuD</name>
    <name type="ordered locus">NGO_0677</name>
</gene>
<dbReference type="EC" id="4.2.1.33" evidence="1"/>
<dbReference type="EMBL" id="AE004969">
    <property type="protein sequence ID" value="AAW89404.1"/>
    <property type="molecule type" value="Genomic_DNA"/>
</dbReference>
<dbReference type="RefSeq" id="WP_010357988.1">
    <property type="nucleotide sequence ID" value="NC_002946.2"/>
</dbReference>
<dbReference type="RefSeq" id="YP_207816.1">
    <property type="nucleotide sequence ID" value="NC_002946.2"/>
</dbReference>
<dbReference type="SMR" id="Q5F8T3"/>
<dbReference type="STRING" id="242231.NGO_0677"/>
<dbReference type="GeneID" id="66753015"/>
<dbReference type="KEGG" id="ngo:NGO_0677"/>
<dbReference type="PATRIC" id="fig|242231.10.peg.798"/>
<dbReference type="HOGENOM" id="CLU_081378_0_3_4"/>
<dbReference type="UniPathway" id="UPA00048">
    <property type="reaction ID" value="UER00071"/>
</dbReference>
<dbReference type="Proteomes" id="UP000000535">
    <property type="component" value="Chromosome"/>
</dbReference>
<dbReference type="GO" id="GO:0009316">
    <property type="term" value="C:3-isopropylmalate dehydratase complex"/>
    <property type="evidence" value="ECO:0007669"/>
    <property type="project" value="InterPro"/>
</dbReference>
<dbReference type="GO" id="GO:0003861">
    <property type="term" value="F:3-isopropylmalate dehydratase activity"/>
    <property type="evidence" value="ECO:0007669"/>
    <property type="project" value="UniProtKB-UniRule"/>
</dbReference>
<dbReference type="GO" id="GO:0009098">
    <property type="term" value="P:L-leucine biosynthetic process"/>
    <property type="evidence" value="ECO:0007669"/>
    <property type="project" value="UniProtKB-UniRule"/>
</dbReference>
<dbReference type="CDD" id="cd01577">
    <property type="entry name" value="IPMI_Swivel"/>
    <property type="match status" value="1"/>
</dbReference>
<dbReference type="FunFam" id="3.20.19.10:FF:000003">
    <property type="entry name" value="3-isopropylmalate dehydratase small subunit"/>
    <property type="match status" value="1"/>
</dbReference>
<dbReference type="Gene3D" id="3.20.19.10">
    <property type="entry name" value="Aconitase, domain 4"/>
    <property type="match status" value="1"/>
</dbReference>
<dbReference type="HAMAP" id="MF_01031">
    <property type="entry name" value="LeuD_type1"/>
    <property type="match status" value="1"/>
</dbReference>
<dbReference type="InterPro" id="IPR004431">
    <property type="entry name" value="3-IsopropMal_deHydase_ssu"/>
</dbReference>
<dbReference type="InterPro" id="IPR015928">
    <property type="entry name" value="Aconitase/3IPM_dehydase_swvl"/>
</dbReference>
<dbReference type="InterPro" id="IPR000573">
    <property type="entry name" value="AconitaseA/IPMdHydase_ssu_swvl"/>
</dbReference>
<dbReference type="InterPro" id="IPR033940">
    <property type="entry name" value="IPMI_Swivel"/>
</dbReference>
<dbReference type="InterPro" id="IPR050075">
    <property type="entry name" value="LeuD"/>
</dbReference>
<dbReference type="NCBIfam" id="TIGR00171">
    <property type="entry name" value="leuD"/>
    <property type="match status" value="1"/>
</dbReference>
<dbReference type="NCBIfam" id="NF002458">
    <property type="entry name" value="PRK01641.1"/>
    <property type="match status" value="1"/>
</dbReference>
<dbReference type="PANTHER" id="PTHR43345:SF5">
    <property type="entry name" value="3-ISOPROPYLMALATE DEHYDRATASE SMALL SUBUNIT"/>
    <property type="match status" value="1"/>
</dbReference>
<dbReference type="PANTHER" id="PTHR43345">
    <property type="entry name" value="3-ISOPROPYLMALATE DEHYDRATASE SMALL SUBUNIT 2-RELATED-RELATED"/>
    <property type="match status" value="1"/>
</dbReference>
<dbReference type="Pfam" id="PF00694">
    <property type="entry name" value="Aconitase_C"/>
    <property type="match status" value="1"/>
</dbReference>
<dbReference type="SUPFAM" id="SSF52016">
    <property type="entry name" value="LeuD/IlvD-like"/>
    <property type="match status" value="1"/>
</dbReference>
<name>LEUD_NEIG1</name>
<proteinExistence type="inferred from homology"/>
<reference key="1">
    <citation type="submission" date="2003-03" db="EMBL/GenBank/DDBJ databases">
        <title>The complete genome sequence of Neisseria gonorrhoeae.</title>
        <authorList>
            <person name="Lewis L.A."/>
            <person name="Gillaspy A.F."/>
            <person name="McLaughlin R.E."/>
            <person name="Gipson M."/>
            <person name="Ducey T.F."/>
            <person name="Ownbey T."/>
            <person name="Hartman K."/>
            <person name="Nydick C."/>
            <person name="Carson M.B."/>
            <person name="Vaughn J."/>
            <person name="Thomson C."/>
            <person name="Song L."/>
            <person name="Lin S."/>
            <person name="Yuan X."/>
            <person name="Najar F."/>
            <person name="Zhan M."/>
            <person name="Ren Q."/>
            <person name="Zhu H."/>
            <person name="Qi S."/>
            <person name="Kenton S.M."/>
            <person name="Lai H."/>
            <person name="White J.D."/>
            <person name="Clifton S."/>
            <person name="Roe B.A."/>
            <person name="Dyer D.W."/>
        </authorList>
    </citation>
    <scope>NUCLEOTIDE SEQUENCE [LARGE SCALE GENOMIC DNA]</scope>
    <source>
        <strain>ATCC 700825 / FA 1090</strain>
    </source>
</reference>
<evidence type="ECO:0000255" key="1">
    <source>
        <dbReference type="HAMAP-Rule" id="MF_01031"/>
    </source>
</evidence>
<feature type="chain" id="PRO_0000141842" description="3-isopropylmalate dehydratase small subunit">
    <location>
        <begin position="1"/>
        <end position="213"/>
    </location>
</feature>
<sequence>MKAFTKITAIVAPLDRSNVDTDAIIPKQFLKSIKRSGFGPNAFDEWRYLDHGEPGMDNGKRPLNPDFSLNQPRYQGAQILLTRKNFGCGSSREHAPWALDDYGFRAIIAPSFADIFFNNCYKNGLLPIVLTEEQVDRLFKEVEANEGYRLSIDLAEQTLTTPGGETFTFDITEHRKHCLLNGLDEIGLTLQHADKIKAFEEKRRQSQPWLFNG</sequence>
<protein>
    <recommendedName>
        <fullName evidence="1">3-isopropylmalate dehydratase small subunit</fullName>
        <ecNumber evidence="1">4.2.1.33</ecNumber>
    </recommendedName>
    <alternativeName>
        <fullName evidence="1">Alpha-IPM isomerase</fullName>
        <shortName evidence="1">IPMI</shortName>
    </alternativeName>
    <alternativeName>
        <fullName evidence="1">Isopropylmalate isomerase</fullName>
    </alternativeName>
</protein>